<keyword id="KW-0066">ATP synthesis</keyword>
<keyword id="KW-1003">Cell membrane</keyword>
<keyword id="KW-0138">CF(0)</keyword>
<keyword id="KW-0375">Hydrogen ion transport</keyword>
<keyword id="KW-0406">Ion transport</keyword>
<keyword id="KW-0446">Lipid-binding</keyword>
<keyword id="KW-0472">Membrane</keyword>
<keyword id="KW-1185">Reference proteome</keyword>
<keyword id="KW-0812">Transmembrane</keyword>
<keyword id="KW-1133">Transmembrane helix</keyword>
<keyword id="KW-0813">Transport</keyword>
<sequence length="70" mass="7065">MSLIAAAIAIGLGALGAGIGNGLIVSRTVEGIARQPEAGKELRTLMFIGVALVEALPIIAVVIAFLAFFS</sequence>
<evidence type="ECO:0000255" key="1">
    <source>
        <dbReference type="HAMAP-Rule" id="MF_01396"/>
    </source>
</evidence>
<protein>
    <recommendedName>
        <fullName evidence="1">ATP synthase subunit c</fullName>
    </recommendedName>
    <alternativeName>
        <fullName evidence="1">ATP synthase F(0) sector subunit c</fullName>
    </alternativeName>
    <alternativeName>
        <fullName evidence="1">F-type ATPase subunit c</fullName>
        <shortName evidence="1">F-ATPase subunit c</shortName>
    </alternativeName>
    <alternativeName>
        <fullName evidence="1">Lipid-binding protein</fullName>
    </alternativeName>
</protein>
<reference key="1">
    <citation type="journal article" date="2004" name="J. Mol. Microbiol. Biotechnol.">
        <title>The complete genome sequence of Bacillus licheniformis DSM13, an organism with great industrial potential.</title>
        <authorList>
            <person name="Veith B."/>
            <person name="Herzberg C."/>
            <person name="Steckel S."/>
            <person name="Feesche J."/>
            <person name="Maurer K.H."/>
            <person name="Ehrenreich P."/>
            <person name="Baeumer S."/>
            <person name="Henne A."/>
            <person name="Liesegang H."/>
            <person name="Merkl R."/>
            <person name="Ehrenreich A."/>
            <person name="Gottschalk G."/>
        </authorList>
    </citation>
    <scope>NUCLEOTIDE SEQUENCE [LARGE SCALE GENOMIC DNA]</scope>
    <source>
        <strain>ATCC 14580 / DSM 13 / JCM 2505 / CCUG 7422 / NBRC 12200 / NCIMB 9375 / NCTC 10341 / NRRL NRS-1264 / Gibson 46</strain>
    </source>
</reference>
<reference key="2">
    <citation type="journal article" date="2004" name="Genome Biol.">
        <title>Complete genome sequence of the industrial bacterium Bacillus licheniformis and comparisons with closely related Bacillus species.</title>
        <authorList>
            <person name="Rey M.W."/>
            <person name="Ramaiya P."/>
            <person name="Nelson B.A."/>
            <person name="Brody-Karpin S.D."/>
            <person name="Zaretsky E.J."/>
            <person name="Tang M."/>
            <person name="Lopez de Leon A."/>
            <person name="Xiang H."/>
            <person name="Gusti V."/>
            <person name="Clausen I.G."/>
            <person name="Olsen P.B."/>
            <person name="Rasmussen M.D."/>
            <person name="Andersen J.T."/>
            <person name="Joergensen P.L."/>
            <person name="Larsen T.S."/>
            <person name="Sorokin A."/>
            <person name="Bolotin A."/>
            <person name="Lapidus A."/>
            <person name="Galleron N."/>
            <person name="Ehrlich S.D."/>
            <person name="Berka R.M."/>
        </authorList>
    </citation>
    <scope>NUCLEOTIDE SEQUENCE [LARGE SCALE GENOMIC DNA]</scope>
    <source>
        <strain>ATCC 14580 / DSM 13 / JCM 2505 / CCUG 7422 / NBRC 12200 / NCIMB 9375 / NCTC 10341 / NRRL NRS-1264 / Gibson 46</strain>
    </source>
</reference>
<comment type="function">
    <text evidence="1">F(1)F(0) ATP synthase produces ATP from ADP in the presence of a proton or sodium gradient. F-type ATPases consist of two structural domains, F(1) containing the extramembraneous catalytic core and F(0) containing the membrane proton channel, linked together by a central stalk and a peripheral stalk. During catalysis, ATP synthesis in the catalytic domain of F(1) is coupled via a rotary mechanism of the central stalk subunits to proton translocation.</text>
</comment>
<comment type="function">
    <text evidence="1">Key component of the F(0) channel; it plays a direct role in translocation across the membrane. A homomeric c-ring of between 10-14 subunits forms the central stalk rotor element with the F(1) delta and epsilon subunits.</text>
</comment>
<comment type="subunit">
    <text evidence="1">F-type ATPases have 2 components, F(1) - the catalytic core - and F(0) - the membrane proton channel. F(1) has five subunits: alpha(3), beta(3), gamma(1), delta(1), epsilon(1). F(0) has three main subunits: a(1), b(2) and c(10-14). The alpha and beta chains form an alternating ring which encloses part of the gamma chain. F(1) is attached to F(0) by a central stalk formed by the gamma and epsilon chains, while a peripheral stalk is formed by the delta and b chains.</text>
</comment>
<comment type="subcellular location">
    <subcellularLocation>
        <location evidence="1">Cell membrane</location>
        <topology evidence="1">Multi-pass membrane protein</topology>
    </subcellularLocation>
</comment>
<comment type="similarity">
    <text evidence="1">Belongs to the ATPase C chain family.</text>
</comment>
<gene>
    <name evidence="1" type="primary">atpE</name>
    <name type="ordered locus">BLi03931</name>
    <name type="ordered locus">BL07066</name>
</gene>
<accession>Q65DW9</accession>
<dbReference type="EMBL" id="AE017333">
    <property type="protein sequence ID" value="AAU42745.1"/>
    <property type="molecule type" value="Genomic_DNA"/>
</dbReference>
<dbReference type="EMBL" id="CP000002">
    <property type="protein sequence ID" value="ABP97416.1"/>
    <property type="molecule type" value="Genomic_DNA"/>
</dbReference>
<dbReference type="RefSeq" id="WP_003186014.1">
    <property type="nucleotide sequence ID" value="NC_006322.1"/>
</dbReference>
<dbReference type="SMR" id="Q65DW9"/>
<dbReference type="STRING" id="279010.BL07066"/>
<dbReference type="GeneID" id="92859496"/>
<dbReference type="KEGG" id="bld:BLi03931"/>
<dbReference type="KEGG" id="bli:BL07066"/>
<dbReference type="eggNOG" id="COG0636">
    <property type="taxonomic scope" value="Bacteria"/>
</dbReference>
<dbReference type="HOGENOM" id="CLU_148047_1_1_9"/>
<dbReference type="Proteomes" id="UP000000606">
    <property type="component" value="Chromosome"/>
</dbReference>
<dbReference type="GO" id="GO:0005886">
    <property type="term" value="C:plasma membrane"/>
    <property type="evidence" value="ECO:0007669"/>
    <property type="project" value="UniProtKB-SubCell"/>
</dbReference>
<dbReference type="GO" id="GO:0045259">
    <property type="term" value="C:proton-transporting ATP synthase complex"/>
    <property type="evidence" value="ECO:0007669"/>
    <property type="project" value="UniProtKB-KW"/>
</dbReference>
<dbReference type="GO" id="GO:0033177">
    <property type="term" value="C:proton-transporting two-sector ATPase complex, proton-transporting domain"/>
    <property type="evidence" value="ECO:0007669"/>
    <property type="project" value="InterPro"/>
</dbReference>
<dbReference type="GO" id="GO:0008289">
    <property type="term" value="F:lipid binding"/>
    <property type="evidence" value="ECO:0007669"/>
    <property type="project" value="UniProtKB-KW"/>
</dbReference>
<dbReference type="GO" id="GO:0046933">
    <property type="term" value="F:proton-transporting ATP synthase activity, rotational mechanism"/>
    <property type="evidence" value="ECO:0007669"/>
    <property type="project" value="UniProtKB-UniRule"/>
</dbReference>
<dbReference type="CDD" id="cd18185">
    <property type="entry name" value="ATP-synt_Fo_c_ATPE"/>
    <property type="match status" value="1"/>
</dbReference>
<dbReference type="FunFam" id="1.20.20.10:FF:000004">
    <property type="entry name" value="ATP synthase subunit c"/>
    <property type="match status" value="1"/>
</dbReference>
<dbReference type="Gene3D" id="1.20.20.10">
    <property type="entry name" value="F1F0 ATP synthase subunit C"/>
    <property type="match status" value="1"/>
</dbReference>
<dbReference type="HAMAP" id="MF_01396">
    <property type="entry name" value="ATP_synth_c_bact"/>
    <property type="match status" value="1"/>
</dbReference>
<dbReference type="InterPro" id="IPR005953">
    <property type="entry name" value="ATP_synth_csu_bac/chlpt"/>
</dbReference>
<dbReference type="InterPro" id="IPR000454">
    <property type="entry name" value="ATP_synth_F0_csu"/>
</dbReference>
<dbReference type="InterPro" id="IPR020537">
    <property type="entry name" value="ATP_synth_F0_csu_DDCD_BS"/>
</dbReference>
<dbReference type="InterPro" id="IPR038662">
    <property type="entry name" value="ATP_synth_F0_csu_sf"/>
</dbReference>
<dbReference type="InterPro" id="IPR002379">
    <property type="entry name" value="ATPase_proteolipid_c-like_dom"/>
</dbReference>
<dbReference type="InterPro" id="IPR035921">
    <property type="entry name" value="F/V-ATP_Csub_sf"/>
</dbReference>
<dbReference type="NCBIfam" id="TIGR01260">
    <property type="entry name" value="ATP_synt_c"/>
    <property type="match status" value="1"/>
</dbReference>
<dbReference type="NCBIfam" id="NF005363">
    <property type="entry name" value="PRK06876.1"/>
    <property type="match status" value="1"/>
</dbReference>
<dbReference type="PANTHER" id="PTHR10031">
    <property type="entry name" value="ATP SYNTHASE LIPID-BINDING PROTEIN, MITOCHONDRIAL"/>
    <property type="match status" value="1"/>
</dbReference>
<dbReference type="PANTHER" id="PTHR10031:SF0">
    <property type="entry name" value="ATPASE PROTEIN 9"/>
    <property type="match status" value="1"/>
</dbReference>
<dbReference type="Pfam" id="PF00137">
    <property type="entry name" value="ATP-synt_C"/>
    <property type="match status" value="1"/>
</dbReference>
<dbReference type="PRINTS" id="PR00124">
    <property type="entry name" value="ATPASEC"/>
</dbReference>
<dbReference type="SUPFAM" id="SSF81333">
    <property type="entry name" value="F1F0 ATP synthase subunit C"/>
    <property type="match status" value="1"/>
</dbReference>
<dbReference type="PROSITE" id="PS00605">
    <property type="entry name" value="ATPASE_C"/>
    <property type="match status" value="1"/>
</dbReference>
<proteinExistence type="inferred from homology"/>
<organism>
    <name type="scientific">Bacillus licheniformis (strain ATCC 14580 / DSM 13 / JCM 2505 / CCUG 7422 / NBRC 12200 / NCIMB 9375 / NCTC 10341 / NRRL NRS-1264 / Gibson 46)</name>
    <dbReference type="NCBI Taxonomy" id="279010"/>
    <lineage>
        <taxon>Bacteria</taxon>
        <taxon>Bacillati</taxon>
        <taxon>Bacillota</taxon>
        <taxon>Bacilli</taxon>
        <taxon>Bacillales</taxon>
        <taxon>Bacillaceae</taxon>
        <taxon>Bacillus</taxon>
    </lineage>
</organism>
<name>ATPL_BACLD</name>
<feature type="chain" id="PRO_0000365847" description="ATP synthase subunit c">
    <location>
        <begin position="1"/>
        <end position="70"/>
    </location>
</feature>
<feature type="transmembrane region" description="Helical" evidence="1">
    <location>
        <begin position="4"/>
        <end position="24"/>
    </location>
</feature>
<feature type="transmembrane region" description="Helical" evidence="1">
    <location>
        <begin position="45"/>
        <end position="65"/>
    </location>
</feature>
<feature type="site" description="Reversibly protonated during proton transport" evidence="1">
    <location>
        <position position="54"/>
    </location>
</feature>